<comment type="function">
    <text evidence="1">Involved in the biosynthesis of isoprenoids. Catalyzes the 1,3-allylic rearrangement of the homoallylic substrate isopentenyl (IPP) to its allylic isomer, dimethylallyl diphosphate (DMAPP).</text>
</comment>
<comment type="catalytic activity">
    <reaction evidence="1">
        <text>isopentenyl diphosphate = dimethylallyl diphosphate</text>
        <dbReference type="Rhea" id="RHEA:23284"/>
        <dbReference type="ChEBI" id="CHEBI:57623"/>
        <dbReference type="ChEBI" id="CHEBI:128769"/>
        <dbReference type="EC" id="5.3.3.2"/>
    </reaction>
</comment>
<comment type="cofactor">
    <cofactor evidence="1">
        <name>FMN</name>
        <dbReference type="ChEBI" id="CHEBI:58210"/>
    </cofactor>
</comment>
<comment type="cofactor">
    <cofactor evidence="1">
        <name>NADPH</name>
        <dbReference type="ChEBI" id="CHEBI:57783"/>
    </cofactor>
</comment>
<comment type="cofactor">
    <cofactor evidence="1">
        <name>Mg(2+)</name>
        <dbReference type="ChEBI" id="CHEBI:18420"/>
    </cofactor>
</comment>
<comment type="subunit">
    <text evidence="1">Homooctamer. Dimer of tetramers.</text>
</comment>
<comment type="subcellular location">
    <subcellularLocation>
        <location evidence="1">Cytoplasm</location>
    </subcellularLocation>
</comment>
<comment type="similarity">
    <text evidence="1">Belongs to the IPP isomerase type 2 family.</text>
</comment>
<evidence type="ECO:0000255" key="1">
    <source>
        <dbReference type="HAMAP-Rule" id="MF_00354"/>
    </source>
</evidence>
<protein>
    <recommendedName>
        <fullName evidence="1">Isopentenyl-diphosphate delta-isomerase</fullName>
        <shortName evidence="1">IPP isomerase</shortName>
        <ecNumber evidence="1">5.3.3.2</ecNumber>
    </recommendedName>
    <alternativeName>
        <fullName evidence="1">Isopentenyl diphosphate:dimethylallyl diphosphate isomerase</fullName>
    </alternativeName>
    <alternativeName>
        <fullName evidence="1">Isopentenyl pyrophosphate isomerase</fullName>
    </alternativeName>
    <alternativeName>
        <fullName evidence="1">Type 2 isopentenyl diphosphate isomerase</fullName>
        <shortName evidence="1">IDI-2</shortName>
    </alternativeName>
</protein>
<proteinExistence type="inferred from homology"/>
<gene>
    <name evidence="1" type="primary">fni</name>
    <name type="ordered locus">TON_0135</name>
</gene>
<reference key="1">
    <citation type="journal article" date="2008" name="J. Bacteriol.">
        <title>The complete genome sequence of Thermococcus onnurineus NA1 reveals a mixed heterotrophic and carboxydotrophic metabolism.</title>
        <authorList>
            <person name="Lee H.S."/>
            <person name="Kang S.G."/>
            <person name="Bae S.S."/>
            <person name="Lim J.K."/>
            <person name="Cho Y."/>
            <person name="Kim Y.J."/>
            <person name="Jeon J.H."/>
            <person name="Cha S.-S."/>
            <person name="Kwon K.K."/>
            <person name="Kim H.-T."/>
            <person name="Park C.-J."/>
            <person name="Lee H.-W."/>
            <person name="Kim S.I."/>
            <person name="Chun J."/>
            <person name="Colwell R.R."/>
            <person name="Kim S.-J."/>
            <person name="Lee J.-H."/>
        </authorList>
    </citation>
    <scope>NUCLEOTIDE SEQUENCE [LARGE SCALE GENOMIC DNA]</scope>
    <source>
        <strain>NA1</strain>
    </source>
</reference>
<accession>B6YST3</accession>
<keyword id="KW-0963">Cytoplasm</keyword>
<keyword id="KW-0285">Flavoprotein</keyword>
<keyword id="KW-0288">FMN</keyword>
<keyword id="KW-0413">Isomerase</keyword>
<keyword id="KW-0414">Isoprene biosynthesis</keyword>
<keyword id="KW-0460">Magnesium</keyword>
<keyword id="KW-0479">Metal-binding</keyword>
<keyword id="KW-0521">NADP</keyword>
<feature type="chain" id="PRO_1000120548" description="Isopentenyl-diphosphate delta-isomerase">
    <location>
        <begin position="1"/>
        <end position="374"/>
    </location>
</feature>
<feature type="binding site" evidence="1">
    <location>
        <begin position="13"/>
        <end position="14"/>
    </location>
    <ligand>
        <name>substrate</name>
    </ligand>
</feature>
<feature type="binding site" evidence="1">
    <location>
        <begin position="71"/>
        <end position="73"/>
    </location>
    <ligand>
        <name>FMN</name>
        <dbReference type="ChEBI" id="CHEBI:58210"/>
    </ligand>
</feature>
<feature type="binding site" evidence="1">
    <location>
        <begin position="104"/>
        <end position="106"/>
    </location>
    <ligand>
        <name>substrate</name>
    </ligand>
</feature>
<feature type="binding site" evidence="1">
    <location>
        <position position="104"/>
    </location>
    <ligand>
        <name>FMN</name>
        <dbReference type="ChEBI" id="CHEBI:58210"/>
    </ligand>
</feature>
<feature type="binding site" evidence="1">
    <location>
        <position position="132"/>
    </location>
    <ligand>
        <name>FMN</name>
        <dbReference type="ChEBI" id="CHEBI:58210"/>
    </ligand>
</feature>
<feature type="binding site" evidence="1">
    <location>
        <position position="171"/>
    </location>
    <ligand>
        <name>substrate</name>
    </ligand>
</feature>
<feature type="binding site" evidence="1">
    <location>
        <position position="172"/>
    </location>
    <ligand>
        <name>Mg(2+)</name>
        <dbReference type="ChEBI" id="CHEBI:18420"/>
    </ligand>
</feature>
<feature type="binding site" evidence="1">
    <location>
        <position position="203"/>
    </location>
    <ligand>
        <name>FMN</name>
        <dbReference type="ChEBI" id="CHEBI:58210"/>
    </ligand>
</feature>
<feature type="binding site" evidence="1">
    <location>
        <position position="233"/>
    </location>
    <ligand>
        <name>FMN</name>
        <dbReference type="ChEBI" id="CHEBI:58210"/>
    </ligand>
</feature>
<feature type="binding site" evidence="1">
    <location>
        <begin position="282"/>
        <end position="284"/>
    </location>
    <ligand>
        <name>FMN</name>
        <dbReference type="ChEBI" id="CHEBI:58210"/>
    </ligand>
</feature>
<feature type="binding site" evidence="1">
    <location>
        <begin position="303"/>
        <end position="304"/>
    </location>
    <ligand>
        <name>FMN</name>
        <dbReference type="ChEBI" id="CHEBI:58210"/>
    </ligand>
</feature>
<sequence>MKAFDKEELTIIRKFEHIEHCLKRNVQAHVSNGFEDVHFVHMSLPEIDKDEIDLSVEFLGRKFDYPIMIAGMTGGTKGSQLAGKINKTLAKAAQELNIPMGVGSQRAMIRKPETWESYYVRDVAPDVFLVGNLGAPQFAETMPDRYGIEEALKAVETIQADALAIHMNPLQESVQPEGDTQYRGVLKALAELKAEFPYPIIAKETGAGVSMEVAIRLESIGIDAIDVGGLGGTSWSGVEYYRAKDELGRNLALKFWDWGIKTAISVAEVRYATELPIIATGGMRDGIAMAKALAMGATFAGVALPLLRPAVKGDVEGVIKVLERYIEEIRNTMFLVGARNVEELRKVPLVITGFTREWLEQRIDLPVYLRDRRI</sequence>
<organism>
    <name type="scientific">Thermococcus onnurineus (strain NA1)</name>
    <dbReference type="NCBI Taxonomy" id="523850"/>
    <lineage>
        <taxon>Archaea</taxon>
        <taxon>Methanobacteriati</taxon>
        <taxon>Methanobacteriota</taxon>
        <taxon>Thermococci</taxon>
        <taxon>Thermococcales</taxon>
        <taxon>Thermococcaceae</taxon>
        <taxon>Thermococcus</taxon>
    </lineage>
</organism>
<name>IDI2_THEON</name>
<dbReference type="EC" id="5.3.3.2" evidence="1"/>
<dbReference type="EMBL" id="CP000855">
    <property type="protein sequence ID" value="ACJ15620.1"/>
    <property type="molecule type" value="Genomic_DNA"/>
</dbReference>
<dbReference type="RefSeq" id="WP_012571093.1">
    <property type="nucleotide sequence ID" value="NC_011529.1"/>
</dbReference>
<dbReference type="SMR" id="B6YST3"/>
<dbReference type="STRING" id="523850.TON_0135"/>
<dbReference type="GeneID" id="7017789"/>
<dbReference type="KEGG" id="ton:TON_0135"/>
<dbReference type="PATRIC" id="fig|523850.10.peg.135"/>
<dbReference type="eggNOG" id="arCOG00613">
    <property type="taxonomic scope" value="Archaea"/>
</dbReference>
<dbReference type="HOGENOM" id="CLU_065515_1_0_2"/>
<dbReference type="OrthoDB" id="371955at2157"/>
<dbReference type="Proteomes" id="UP000002727">
    <property type="component" value="Chromosome"/>
</dbReference>
<dbReference type="GO" id="GO:0005737">
    <property type="term" value="C:cytoplasm"/>
    <property type="evidence" value="ECO:0007669"/>
    <property type="project" value="UniProtKB-SubCell"/>
</dbReference>
<dbReference type="GO" id="GO:0010181">
    <property type="term" value="F:FMN binding"/>
    <property type="evidence" value="ECO:0007669"/>
    <property type="project" value="UniProtKB-UniRule"/>
</dbReference>
<dbReference type="GO" id="GO:0004452">
    <property type="term" value="F:isopentenyl-diphosphate delta-isomerase activity"/>
    <property type="evidence" value="ECO:0007669"/>
    <property type="project" value="UniProtKB-UniRule"/>
</dbReference>
<dbReference type="GO" id="GO:0000287">
    <property type="term" value="F:magnesium ion binding"/>
    <property type="evidence" value="ECO:0007669"/>
    <property type="project" value="UniProtKB-UniRule"/>
</dbReference>
<dbReference type="GO" id="GO:0070402">
    <property type="term" value="F:NADPH binding"/>
    <property type="evidence" value="ECO:0007669"/>
    <property type="project" value="UniProtKB-UniRule"/>
</dbReference>
<dbReference type="GO" id="GO:0016491">
    <property type="term" value="F:oxidoreductase activity"/>
    <property type="evidence" value="ECO:0007669"/>
    <property type="project" value="InterPro"/>
</dbReference>
<dbReference type="GO" id="GO:0008299">
    <property type="term" value="P:isoprenoid biosynthetic process"/>
    <property type="evidence" value="ECO:0007669"/>
    <property type="project" value="UniProtKB-UniRule"/>
</dbReference>
<dbReference type="CDD" id="cd02811">
    <property type="entry name" value="IDI-2_FMN"/>
    <property type="match status" value="1"/>
</dbReference>
<dbReference type="Gene3D" id="3.20.20.70">
    <property type="entry name" value="Aldolase class I"/>
    <property type="match status" value="1"/>
</dbReference>
<dbReference type="HAMAP" id="MF_00354">
    <property type="entry name" value="Idi_2"/>
    <property type="match status" value="1"/>
</dbReference>
<dbReference type="InterPro" id="IPR013785">
    <property type="entry name" value="Aldolase_TIM"/>
</dbReference>
<dbReference type="InterPro" id="IPR000262">
    <property type="entry name" value="FMN-dep_DH"/>
</dbReference>
<dbReference type="InterPro" id="IPR011179">
    <property type="entry name" value="IPdP_isomerase"/>
</dbReference>
<dbReference type="NCBIfam" id="TIGR02151">
    <property type="entry name" value="IPP_isom_2"/>
    <property type="match status" value="1"/>
</dbReference>
<dbReference type="PANTHER" id="PTHR43665">
    <property type="entry name" value="ISOPENTENYL-DIPHOSPHATE DELTA-ISOMERASE"/>
    <property type="match status" value="1"/>
</dbReference>
<dbReference type="PANTHER" id="PTHR43665:SF1">
    <property type="entry name" value="ISOPENTENYL-DIPHOSPHATE DELTA-ISOMERASE"/>
    <property type="match status" value="1"/>
</dbReference>
<dbReference type="Pfam" id="PF01070">
    <property type="entry name" value="FMN_dh"/>
    <property type="match status" value="2"/>
</dbReference>
<dbReference type="PIRSF" id="PIRSF003314">
    <property type="entry name" value="IPP_isomerase"/>
    <property type="match status" value="1"/>
</dbReference>
<dbReference type="SMART" id="SM01240">
    <property type="entry name" value="IMPDH"/>
    <property type="match status" value="1"/>
</dbReference>
<dbReference type="SUPFAM" id="SSF51395">
    <property type="entry name" value="FMN-linked oxidoreductases"/>
    <property type="match status" value="1"/>
</dbReference>